<dbReference type="EMBL" id="AF245516">
    <property type="protein sequence ID" value="AAF73427.1"/>
    <property type="molecule type" value="mRNA"/>
</dbReference>
<dbReference type="EMBL" id="AY128454">
    <property type="protein sequence ID" value="AAM75047.1"/>
    <property type="molecule type" value="mRNA"/>
</dbReference>
<dbReference type="EMBL" id="AE014297">
    <property type="protein sequence ID" value="AHN57283.1"/>
    <property type="molecule type" value="Genomic_DNA"/>
</dbReference>
<dbReference type="EMBL" id="AE014297">
    <property type="protein sequence ID" value="AAF54632.1"/>
    <property type="molecule type" value="Genomic_DNA"/>
</dbReference>
<dbReference type="RefSeq" id="NP_001287284.1">
    <property type="nucleotide sequence ID" value="NM_001300355.1"/>
</dbReference>
<dbReference type="RefSeq" id="NP_650068.1">
    <property type="nucleotide sequence ID" value="NM_141811.2"/>
</dbReference>
<dbReference type="SMR" id="Q9VGP4"/>
<dbReference type="FunCoup" id="Q9VGP4">
    <property type="interactions" value="2278"/>
</dbReference>
<dbReference type="IntAct" id="Q9VGP4">
    <property type="interactions" value="90"/>
</dbReference>
<dbReference type="STRING" id="7227.FBpp0081862"/>
<dbReference type="PaxDb" id="7227-FBpp0081862"/>
<dbReference type="EnsemblMetazoa" id="FBtr0082386">
    <property type="protein sequence ID" value="FBpp0081862"/>
    <property type="gene ID" value="FBgn0037894"/>
</dbReference>
<dbReference type="EnsemblMetazoa" id="FBtr0346638">
    <property type="protein sequence ID" value="FBpp0312218"/>
    <property type="gene ID" value="FBgn0037894"/>
</dbReference>
<dbReference type="GeneID" id="41367"/>
<dbReference type="KEGG" id="dme:Dmel_CG5252"/>
<dbReference type="UCSC" id="CG5252-RA">
    <property type="organism name" value="d. melanogaster"/>
</dbReference>
<dbReference type="AGR" id="FB:FBgn0037894"/>
<dbReference type="CTD" id="55705"/>
<dbReference type="FlyBase" id="FBgn0037894">
    <property type="gene designation" value="Ipo9"/>
</dbReference>
<dbReference type="VEuPathDB" id="VectorBase:FBgn0037894"/>
<dbReference type="eggNOG" id="KOG2274">
    <property type="taxonomic scope" value="Eukaryota"/>
</dbReference>
<dbReference type="GeneTree" id="ENSGT00390000008224"/>
<dbReference type="HOGENOM" id="CLU_008920_1_0_1"/>
<dbReference type="InParanoid" id="Q9VGP4"/>
<dbReference type="OMA" id="FINCIVT"/>
<dbReference type="OrthoDB" id="431626at2759"/>
<dbReference type="PhylomeDB" id="Q9VGP4"/>
<dbReference type="BioGRID-ORCS" id="41367">
    <property type="hits" value="0 hits in 1 CRISPR screen"/>
</dbReference>
<dbReference type="ChiTaRS" id="Ranbp9">
    <property type="organism name" value="fly"/>
</dbReference>
<dbReference type="GenomeRNAi" id="41367"/>
<dbReference type="PRO" id="PR:Q9VGP4"/>
<dbReference type="Proteomes" id="UP000000803">
    <property type="component" value="Chromosome 3R"/>
</dbReference>
<dbReference type="Bgee" id="FBgn0037894">
    <property type="expression patterns" value="Expressed in ovary and 61 other cell types or tissues"/>
</dbReference>
<dbReference type="ExpressionAtlas" id="Q9VGP4">
    <property type="expression patterns" value="baseline and differential"/>
</dbReference>
<dbReference type="GO" id="GO:0005829">
    <property type="term" value="C:cytosol"/>
    <property type="evidence" value="ECO:0000314"/>
    <property type="project" value="FlyBase"/>
</dbReference>
<dbReference type="GO" id="GO:0005654">
    <property type="term" value="C:nucleoplasm"/>
    <property type="evidence" value="ECO:0000314"/>
    <property type="project" value="FlyBase"/>
</dbReference>
<dbReference type="GO" id="GO:0061608">
    <property type="term" value="F:nuclear import signal receptor activity"/>
    <property type="evidence" value="ECO:0000250"/>
    <property type="project" value="FlyBase"/>
</dbReference>
<dbReference type="GO" id="GO:0031267">
    <property type="term" value="F:small GTPase binding"/>
    <property type="evidence" value="ECO:0007669"/>
    <property type="project" value="InterPro"/>
</dbReference>
<dbReference type="GO" id="GO:0031144">
    <property type="term" value="P:proteasome localization"/>
    <property type="evidence" value="ECO:0000315"/>
    <property type="project" value="UniProtKB"/>
</dbReference>
<dbReference type="GO" id="GO:0006606">
    <property type="term" value="P:protein import into nucleus"/>
    <property type="evidence" value="ECO:0000315"/>
    <property type="project" value="FlyBase"/>
</dbReference>
<dbReference type="FunFam" id="1.25.10.10:FF:000459">
    <property type="entry name" value="ARM repeat superfamily protein"/>
    <property type="match status" value="1"/>
</dbReference>
<dbReference type="Gene3D" id="1.25.10.10">
    <property type="entry name" value="Leucine-rich Repeat Variant"/>
    <property type="match status" value="1"/>
</dbReference>
<dbReference type="InterPro" id="IPR011989">
    <property type="entry name" value="ARM-like"/>
</dbReference>
<dbReference type="InterPro" id="IPR016024">
    <property type="entry name" value="ARM-type_fold"/>
</dbReference>
<dbReference type="InterPro" id="IPR056840">
    <property type="entry name" value="HEAT_IPO9_central"/>
</dbReference>
<dbReference type="InterPro" id="IPR001494">
    <property type="entry name" value="Importin-beta_N"/>
</dbReference>
<dbReference type="PANTHER" id="PTHR10997">
    <property type="entry name" value="IMPORTIN-7, 8, 11"/>
    <property type="match status" value="1"/>
</dbReference>
<dbReference type="PANTHER" id="PTHR10997:SF9">
    <property type="entry name" value="IMPORTIN-9"/>
    <property type="match status" value="1"/>
</dbReference>
<dbReference type="Pfam" id="PF25018">
    <property type="entry name" value="HEAT_IPO9_c"/>
    <property type="match status" value="1"/>
</dbReference>
<dbReference type="Pfam" id="PF03810">
    <property type="entry name" value="IBN_N"/>
    <property type="match status" value="1"/>
</dbReference>
<dbReference type="SMART" id="SM00913">
    <property type="entry name" value="IBN_N"/>
    <property type="match status" value="1"/>
</dbReference>
<dbReference type="SUPFAM" id="SSF48371">
    <property type="entry name" value="ARM repeat"/>
    <property type="match status" value="1"/>
</dbReference>
<dbReference type="PROSITE" id="PS50166">
    <property type="entry name" value="IMPORTIN_B_NT"/>
    <property type="match status" value="1"/>
</dbReference>
<gene>
    <name evidence="5 8" type="primary">Ipo9</name>
    <name evidence="6 8" type="synonym">Ranbp9</name>
    <name evidence="8" type="ORF">CG5252</name>
</gene>
<comment type="function">
    <text evidence="1 4">Nuclear transport receptor that mediates nuclear import of proteins (PubMed:33632744). Serves as receptor for nuclear localization signals (NLS) in cargo substrates (By similarity). Is thought to mediate docking of the importin/substrate complex to the nuclear pore complex (NPC) through binding to nucleoporin and the complex is subsequently translocated through the pore by an energy requiring, Ran-dependent mechanism (By similarity). Mediates the import of pre-assembled proteasomes into the nucleus during the late stages of sperm development (PubMed:33632744).</text>
</comment>
<comment type="subcellular location">
    <subcellularLocation>
        <location evidence="4">Cytoplasm</location>
    </subcellularLocation>
    <subcellularLocation>
        <location evidence="4">Nucleus</location>
    </subcellularLocation>
</comment>
<comment type="disruption phenotype">
    <text evidence="4">Male and female sterility caused by disruption of chromosome segregation and condensation during meiosis (PubMed:33632744). Impaired nuclear localization of proteasome components (PubMed:33632744). Males form abnormally structured sperm and fail to properly exchange histones for protamines (PubMed:33632744).</text>
</comment>
<comment type="similarity">
    <text evidence="7">Belongs to the importin beta family.</text>
</comment>
<reference key="1">
    <citation type="submission" date="2000-03" db="EMBL/GenBank/DDBJ databases">
        <title>Drosophila melanogaster RanBP9.</title>
        <authorList>
            <person name="Hartmann E."/>
            <person name="Goerlich D."/>
        </authorList>
    </citation>
    <scope>NUCLEOTIDE SEQUENCE [MRNA]</scope>
</reference>
<reference key="2">
    <citation type="journal article" date="2000" name="Science">
        <title>The genome sequence of Drosophila melanogaster.</title>
        <authorList>
            <person name="Adams M.D."/>
            <person name="Celniker S.E."/>
            <person name="Holt R.A."/>
            <person name="Evans C.A."/>
            <person name="Gocayne J.D."/>
            <person name="Amanatides P.G."/>
            <person name="Scherer S.E."/>
            <person name="Li P.W."/>
            <person name="Hoskins R.A."/>
            <person name="Galle R.F."/>
            <person name="George R.A."/>
            <person name="Lewis S.E."/>
            <person name="Richards S."/>
            <person name="Ashburner M."/>
            <person name="Henderson S.N."/>
            <person name="Sutton G.G."/>
            <person name="Wortman J.R."/>
            <person name="Yandell M.D."/>
            <person name="Zhang Q."/>
            <person name="Chen L.X."/>
            <person name="Brandon R.C."/>
            <person name="Rogers Y.-H.C."/>
            <person name="Blazej R.G."/>
            <person name="Champe M."/>
            <person name="Pfeiffer B.D."/>
            <person name="Wan K.H."/>
            <person name="Doyle C."/>
            <person name="Baxter E.G."/>
            <person name="Helt G."/>
            <person name="Nelson C.R."/>
            <person name="Miklos G.L.G."/>
            <person name="Abril J.F."/>
            <person name="Agbayani A."/>
            <person name="An H.-J."/>
            <person name="Andrews-Pfannkoch C."/>
            <person name="Baldwin D."/>
            <person name="Ballew R.M."/>
            <person name="Basu A."/>
            <person name="Baxendale J."/>
            <person name="Bayraktaroglu L."/>
            <person name="Beasley E.M."/>
            <person name="Beeson K.Y."/>
            <person name="Benos P.V."/>
            <person name="Berman B.P."/>
            <person name="Bhandari D."/>
            <person name="Bolshakov S."/>
            <person name="Borkova D."/>
            <person name="Botchan M.R."/>
            <person name="Bouck J."/>
            <person name="Brokstein P."/>
            <person name="Brottier P."/>
            <person name="Burtis K.C."/>
            <person name="Busam D.A."/>
            <person name="Butler H."/>
            <person name="Cadieu E."/>
            <person name="Center A."/>
            <person name="Chandra I."/>
            <person name="Cherry J.M."/>
            <person name="Cawley S."/>
            <person name="Dahlke C."/>
            <person name="Davenport L.B."/>
            <person name="Davies P."/>
            <person name="de Pablos B."/>
            <person name="Delcher A."/>
            <person name="Deng Z."/>
            <person name="Mays A.D."/>
            <person name="Dew I."/>
            <person name="Dietz S.M."/>
            <person name="Dodson K."/>
            <person name="Doup L.E."/>
            <person name="Downes M."/>
            <person name="Dugan-Rocha S."/>
            <person name="Dunkov B.C."/>
            <person name="Dunn P."/>
            <person name="Durbin K.J."/>
            <person name="Evangelista C.C."/>
            <person name="Ferraz C."/>
            <person name="Ferriera S."/>
            <person name="Fleischmann W."/>
            <person name="Fosler C."/>
            <person name="Gabrielian A.E."/>
            <person name="Garg N.S."/>
            <person name="Gelbart W.M."/>
            <person name="Glasser K."/>
            <person name="Glodek A."/>
            <person name="Gong F."/>
            <person name="Gorrell J.H."/>
            <person name="Gu Z."/>
            <person name="Guan P."/>
            <person name="Harris M."/>
            <person name="Harris N.L."/>
            <person name="Harvey D.A."/>
            <person name="Heiman T.J."/>
            <person name="Hernandez J.R."/>
            <person name="Houck J."/>
            <person name="Hostin D."/>
            <person name="Houston K.A."/>
            <person name="Howland T.J."/>
            <person name="Wei M.-H."/>
            <person name="Ibegwam C."/>
            <person name="Jalali M."/>
            <person name="Kalush F."/>
            <person name="Karpen G.H."/>
            <person name="Ke Z."/>
            <person name="Kennison J.A."/>
            <person name="Ketchum K.A."/>
            <person name="Kimmel B.E."/>
            <person name="Kodira C.D."/>
            <person name="Kraft C.L."/>
            <person name="Kravitz S."/>
            <person name="Kulp D."/>
            <person name="Lai Z."/>
            <person name="Lasko P."/>
            <person name="Lei Y."/>
            <person name="Levitsky A.A."/>
            <person name="Li J.H."/>
            <person name="Li Z."/>
            <person name="Liang Y."/>
            <person name="Lin X."/>
            <person name="Liu X."/>
            <person name="Mattei B."/>
            <person name="McIntosh T.C."/>
            <person name="McLeod M.P."/>
            <person name="McPherson D."/>
            <person name="Merkulov G."/>
            <person name="Milshina N.V."/>
            <person name="Mobarry C."/>
            <person name="Morris J."/>
            <person name="Moshrefi A."/>
            <person name="Mount S.M."/>
            <person name="Moy M."/>
            <person name="Murphy B."/>
            <person name="Murphy L."/>
            <person name="Muzny D.M."/>
            <person name="Nelson D.L."/>
            <person name="Nelson D.R."/>
            <person name="Nelson K.A."/>
            <person name="Nixon K."/>
            <person name="Nusskern D.R."/>
            <person name="Pacleb J.M."/>
            <person name="Palazzolo M."/>
            <person name="Pittman G.S."/>
            <person name="Pan S."/>
            <person name="Pollard J."/>
            <person name="Puri V."/>
            <person name="Reese M.G."/>
            <person name="Reinert K."/>
            <person name="Remington K."/>
            <person name="Saunders R.D.C."/>
            <person name="Scheeler F."/>
            <person name="Shen H."/>
            <person name="Shue B.C."/>
            <person name="Siden-Kiamos I."/>
            <person name="Simpson M."/>
            <person name="Skupski M.P."/>
            <person name="Smith T.J."/>
            <person name="Spier E."/>
            <person name="Spradling A.C."/>
            <person name="Stapleton M."/>
            <person name="Strong R."/>
            <person name="Sun E."/>
            <person name="Svirskas R."/>
            <person name="Tector C."/>
            <person name="Turner R."/>
            <person name="Venter E."/>
            <person name="Wang A.H."/>
            <person name="Wang X."/>
            <person name="Wang Z.-Y."/>
            <person name="Wassarman D.A."/>
            <person name="Weinstock G.M."/>
            <person name="Weissenbach J."/>
            <person name="Williams S.M."/>
            <person name="Woodage T."/>
            <person name="Worley K.C."/>
            <person name="Wu D."/>
            <person name="Yang S."/>
            <person name="Yao Q.A."/>
            <person name="Ye J."/>
            <person name="Yeh R.-F."/>
            <person name="Zaveri J.S."/>
            <person name="Zhan M."/>
            <person name="Zhang G."/>
            <person name="Zhao Q."/>
            <person name="Zheng L."/>
            <person name="Zheng X.H."/>
            <person name="Zhong F.N."/>
            <person name="Zhong W."/>
            <person name="Zhou X."/>
            <person name="Zhu S.C."/>
            <person name="Zhu X."/>
            <person name="Smith H.O."/>
            <person name="Gibbs R.A."/>
            <person name="Myers E.W."/>
            <person name="Rubin G.M."/>
            <person name="Venter J.C."/>
        </authorList>
    </citation>
    <scope>NUCLEOTIDE SEQUENCE [LARGE SCALE GENOMIC DNA]</scope>
    <source>
        <strain>Berkeley</strain>
    </source>
</reference>
<reference key="3">
    <citation type="journal article" date="2002" name="Genome Biol.">
        <title>Annotation of the Drosophila melanogaster euchromatic genome: a systematic review.</title>
        <authorList>
            <person name="Misra S."/>
            <person name="Crosby M.A."/>
            <person name="Mungall C.J."/>
            <person name="Matthews B.B."/>
            <person name="Campbell K.S."/>
            <person name="Hradecky P."/>
            <person name="Huang Y."/>
            <person name="Kaminker J.S."/>
            <person name="Millburn G.H."/>
            <person name="Prochnik S.E."/>
            <person name="Smith C.D."/>
            <person name="Tupy J.L."/>
            <person name="Whitfield E.J."/>
            <person name="Bayraktaroglu L."/>
            <person name="Berman B.P."/>
            <person name="Bettencourt B.R."/>
            <person name="Celniker S.E."/>
            <person name="de Grey A.D.N.J."/>
            <person name="Drysdale R.A."/>
            <person name="Harris N.L."/>
            <person name="Richter J."/>
            <person name="Russo S."/>
            <person name="Schroeder A.J."/>
            <person name="Shu S.Q."/>
            <person name="Stapleton M."/>
            <person name="Yamada C."/>
            <person name="Ashburner M."/>
            <person name="Gelbart W.M."/>
            <person name="Rubin G.M."/>
            <person name="Lewis S.E."/>
        </authorList>
    </citation>
    <scope>GENOME REANNOTATION</scope>
    <source>
        <strain>Berkeley</strain>
    </source>
</reference>
<reference key="4">
    <citation type="journal article" date="2002" name="Genome Biol.">
        <title>A Drosophila full-length cDNA resource.</title>
        <authorList>
            <person name="Stapleton M."/>
            <person name="Carlson J.W."/>
            <person name="Brokstein P."/>
            <person name="Yu C."/>
            <person name="Champe M."/>
            <person name="George R.A."/>
            <person name="Guarin H."/>
            <person name="Kronmiller B."/>
            <person name="Pacleb J.M."/>
            <person name="Park S."/>
            <person name="Wan K.H."/>
            <person name="Rubin G.M."/>
            <person name="Celniker S.E."/>
        </authorList>
    </citation>
    <scope>NUCLEOTIDE SEQUENCE [LARGE SCALE MRNA]</scope>
    <source>
        <strain>Berkeley</strain>
        <tissue>Larva</tissue>
        <tissue>Pupae</tissue>
    </source>
</reference>
<reference key="5">
    <citation type="journal article" date="2021" name="J. Cell Sci.">
        <title>Importin-9 regulates chromosome segregation and packaging in Drosophila germ cells.</title>
        <authorList>
            <person name="Palacios V."/>
            <person name="Kimble G.C."/>
            <person name="Tootle T.L."/>
            <person name="Buszczak M."/>
        </authorList>
    </citation>
    <scope>FUNCTION</scope>
    <scope>SUBCELLULAR LOCATION</scope>
    <scope>DISRUPTION PHENOTYPE</scope>
</reference>
<evidence type="ECO:0000250" key="1">
    <source>
        <dbReference type="UniProtKB" id="Q96P70"/>
    </source>
</evidence>
<evidence type="ECO:0000255" key="2">
    <source>
        <dbReference type="PROSITE-ProRule" id="PRU00115"/>
    </source>
</evidence>
<evidence type="ECO:0000256" key="3">
    <source>
        <dbReference type="SAM" id="MobiDB-lite"/>
    </source>
</evidence>
<evidence type="ECO:0000269" key="4">
    <source>
    </source>
</evidence>
<evidence type="ECO:0000303" key="5">
    <source>
    </source>
</evidence>
<evidence type="ECO:0000303" key="6">
    <source ref="1"/>
</evidence>
<evidence type="ECO:0000305" key="7"/>
<evidence type="ECO:0000312" key="8">
    <source>
        <dbReference type="FlyBase" id="FBgn0037894"/>
    </source>
</evidence>
<proteinExistence type="evidence at transcript level"/>
<keyword id="KW-0963">Cytoplasm</keyword>
<keyword id="KW-0539">Nucleus</keyword>
<keyword id="KW-0653">Protein transport</keyword>
<keyword id="KW-1185">Reference proteome</keyword>
<keyword id="KW-0813">Transport</keyword>
<protein>
    <recommendedName>
        <fullName evidence="5">Importin-9</fullName>
    </recommendedName>
    <alternativeName>
        <fullName evidence="6">Ran-binding protein 9</fullName>
    </alternativeName>
</protein>
<sequence>MSLQFQNDCGDSVKQAIIEELQNLLSSDTGVLQQTEKRIKQLEYTEGYGVYLSEIIMNQAHELPLRQIAIVMLTRYVENHWTDDDDVKRKANGCMASEQAKRTIRNILPNGLYDPNSKIRSSVAHTISTIAATDYPHCWAELFDIIVKCLGGNEDSIHGAMQVLQDFSYDVEQIKELGPVVIPEVYRIFDSEQNYSIKTRVSAIRILKPLFASIAALITNKEEQSTMMSSILTNFMDKLMHYLSMNSGAVSSFLLRTEIIKVFTHLVNEMPKYINPFMDRVLPIVWQLLTQIAETYVKVSVNQTETSPLASGDSEEDDEQTNFQSLIIQILEFINCILTCNKLRGSIKNVLADLIYITIVYIQLSEEQLEDWHDDPEKFVDDEDDGGVELTVRMCGRDVLLAINDEFGANAIQPLQEALGRHFSVADAEKAANNPNWWKIQEACMDAVHAFRDVILAGDSTFDLLNYLTIVRNLLVHQESPPLVGRALWTLSIYSKSDLYNPQMLTEILDVTLCSLSPEKSHILRISAVRTLNGFLQANETIDGEKRTLLVSKLPGFLDGIMALVPGSKAAVLALLMEALTFMVKFDAEFAFASQAKITPLAIAVFLKYTEDPYVLETVQDLIKALCQRKECLGPLQEKFIPTIVSILGLTGAASTEKQDIALDVLNTIVRYTEPPLNNSLLETAFPAIINCVLHTDDHAVMVAGGECLRSFINVSPEQICSYKNGEGINCIMQVVATVLLNPMNSEMTAAGQIGRLVITIITKMGSMLGQNVDMLLKAVISKMQNLECLKVIMNLVLIFAHLFLTQMDAVLNFLSTVPGPNGEPAMQFVLTNWLSRQNSFFGNYERKVTTMALCKLFEYGVATQDNRLTTITFKELVDDPTDTRRRTRSVAATTQKWVTIPALVKIFKVLISEYQHFQEGKSDEPLTDSEEDGDDEDAPGNPDKPRYISDLFESDEDNAEDEQLLQELLKETNYQGDIADNLQKFLTTFTQNEHFPTFYEHLTEGERLILLSKVQQK</sequence>
<name>IPO9_DROME</name>
<accession>Q9VGP4</accession>
<organism>
    <name type="scientific">Drosophila melanogaster</name>
    <name type="common">Fruit fly</name>
    <dbReference type="NCBI Taxonomy" id="7227"/>
    <lineage>
        <taxon>Eukaryota</taxon>
        <taxon>Metazoa</taxon>
        <taxon>Ecdysozoa</taxon>
        <taxon>Arthropoda</taxon>
        <taxon>Hexapoda</taxon>
        <taxon>Insecta</taxon>
        <taxon>Pterygota</taxon>
        <taxon>Neoptera</taxon>
        <taxon>Endopterygota</taxon>
        <taxon>Diptera</taxon>
        <taxon>Brachycera</taxon>
        <taxon>Muscomorpha</taxon>
        <taxon>Ephydroidea</taxon>
        <taxon>Drosophilidae</taxon>
        <taxon>Drosophila</taxon>
        <taxon>Sophophora</taxon>
    </lineage>
</organism>
<feature type="chain" id="PRO_0000455442" description="Importin-9">
    <location>
        <begin position="1"/>
        <end position="1018"/>
    </location>
</feature>
<feature type="domain" description="Importin N-terminal" evidence="2">
    <location>
        <begin position="35"/>
        <end position="114"/>
    </location>
</feature>
<feature type="region of interest" description="Disordered" evidence="3">
    <location>
        <begin position="921"/>
        <end position="950"/>
    </location>
</feature>
<feature type="compositionally biased region" description="Acidic residues" evidence="3">
    <location>
        <begin position="926"/>
        <end position="939"/>
    </location>
</feature>